<reference key="1">
    <citation type="submission" date="2008-05" db="EMBL/GenBank/DDBJ databases">
        <title>Complete sequence of Shigella boydii serotype 18 strain BS512.</title>
        <authorList>
            <person name="Rasko D.A."/>
            <person name="Rosovitz M."/>
            <person name="Maurelli A.T."/>
            <person name="Myers G."/>
            <person name="Seshadri R."/>
            <person name="Cer R."/>
            <person name="Jiang L."/>
            <person name="Ravel J."/>
            <person name="Sebastian Y."/>
        </authorList>
    </citation>
    <scope>NUCLEOTIDE SEQUENCE [LARGE SCALE GENOMIC DNA]</scope>
    <source>
        <strain>CDC 3083-94 / BS512</strain>
    </source>
</reference>
<keyword id="KW-0997">Cell inner membrane</keyword>
<keyword id="KW-1003">Cell membrane</keyword>
<keyword id="KW-0406">Ion transport</keyword>
<keyword id="KW-0472">Membrane</keyword>
<keyword id="KW-0630">Potassium</keyword>
<keyword id="KW-0633">Potassium transport</keyword>
<keyword id="KW-1185">Reference proteome</keyword>
<keyword id="KW-0769">Symport</keyword>
<keyword id="KW-0812">Transmembrane</keyword>
<keyword id="KW-1133">Transmembrane helix</keyword>
<keyword id="KW-0813">Transport</keyword>
<organism>
    <name type="scientific">Shigella boydii serotype 18 (strain CDC 3083-94 / BS512)</name>
    <dbReference type="NCBI Taxonomy" id="344609"/>
    <lineage>
        <taxon>Bacteria</taxon>
        <taxon>Pseudomonadati</taxon>
        <taxon>Pseudomonadota</taxon>
        <taxon>Gammaproteobacteria</taxon>
        <taxon>Enterobacterales</taxon>
        <taxon>Enterobacteriaceae</taxon>
        <taxon>Shigella</taxon>
    </lineage>
</organism>
<comment type="function">
    <text evidence="1">Responsible for the low-affinity transport of potassium into the cell. Likely operates as a K(+):H(+) symporter.</text>
</comment>
<comment type="catalytic activity">
    <reaction evidence="1">
        <text>K(+)(in) + H(+)(in) = K(+)(out) + H(+)(out)</text>
        <dbReference type="Rhea" id="RHEA:28490"/>
        <dbReference type="ChEBI" id="CHEBI:15378"/>
        <dbReference type="ChEBI" id="CHEBI:29103"/>
    </reaction>
    <physiologicalReaction direction="right-to-left" evidence="1">
        <dbReference type="Rhea" id="RHEA:28492"/>
    </physiologicalReaction>
</comment>
<comment type="subcellular location">
    <subcellularLocation>
        <location evidence="1">Cell inner membrane</location>
        <topology evidence="1">Multi-pass membrane protein</topology>
    </subcellularLocation>
</comment>
<comment type="similarity">
    <text evidence="1">Belongs to the HAK/KUP transporter (TC 2.A.72) family.</text>
</comment>
<accession>B2TU32</accession>
<gene>
    <name evidence="1" type="primary">kup</name>
    <name type="ordered locus">SbBS512_E4173</name>
</gene>
<dbReference type="EMBL" id="CP001063">
    <property type="protein sequence ID" value="ACD09131.1"/>
    <property type="molecule type" value="Genomic_DNA"/>
</dbReference>
<dbReference type="RefSeq" id="WP_000102317.1">
    <property type="nucleotide sequence ID" value="NC_010658.1"/>
</dbReference>
<dbReference type="STRING" id="344609.SbBS512_E4173"/>
<dbReference type="KEGG" id="sbc:SbBS512_E4173"/>
<dbReference type="HOGENOM" id="CLU_008142_4_2_6"/>
<dbReference type="Proteomes" id="UP000001030">
    <property type="component" value="Chromosome"/>
</dbReference>
<dbReference type="GO" id="GO:0005886">
    <property type="term" value="C:plasma membrane"/>
    <property type="evidence" value="ECO:0007669"/>
    <property type="project" value="UniProtKB-SubCell"/>
</dbReference>
<dbReference type="GO" id="GO:0015079">
    <property type="term" value="F:potassium ion transmembrane transporter activity"/>
    <property type="evidence" value="ECO:0007669"/>
    <property type="project" value="UniProtKB-UniRule"/>
</dbReference>
<dbReference type="GO" id="GO:0015293">
    <property type="term" value="F:symporter activity"/>
    <property type="evidence" value="ECO:0007669"/>
    <property type="project" value="UniProtKB-UniRule"/>
</dbReference>
<dbReference type="HAMAP" id="MF_01522">
    <property type="entry name" value="Kup"/>
    <property type="match status" value="1"/>
</dbReference>
<dbReference type="InterPro" id="IPR003855">
    <property type="entry name" value="K+_transporter"/>
</dbReference>
<dbReference type="InterPro" id="IPR053952">
    <property type="entry name" value="K_trans_C"/>
</dbReference>
<dbReference type="InterPro" id="IPR053951">
    <property type="entry name" value="K_trans_N"/>
</dbReference>
<dbReference type="InterPro" id="IPR023051">
    <property type="entry name" value="Kup"/>
</dbReference>
<dbReference type="NCBIfam" id="TIGR00794">
    <property type="entry name" value="kup"/>
    <property type="match status" value="1"/>
</dbReference>
<dbReference type="NCBIfam" id="NF008015">
    <property type="entry name" value="PRK10745.1"/>
    <property type="match status" value="1"/>
</dbReference>
<dbReference type="PANTHER" id="PTHR30540:SF79">
    <property type="entry name" value="LOW AFFINITY POTASSIUM TRANSPORT SYSTEM PROTEIN KUP"/>
    <property type="match status" value="1"/>
</dbReference>
<dbReference type="PANTHER" id="PTHR30540">
    <property type="entry name" value="OSMOTIC STRESS POTASSIUM TRANSPORTER"/>
    <property type="match status" value="1"/>
</dbReference>
<dbReference type="Pfam" id="PF02705">
    <property type="entry name" value="K_trans"/>
    <property type="match status" value="1"/>
</dbReference>
<dbReference type="Pfam" id="PF22776">
    <property type="entry name" value="K_trans_C"/>
    <property type="match status" value="1"/>
</dbReference>
<sequence>MSTDNKQSLPAITLAAIGVVYGDIGTSPLYTLRECLSGQFGFGVERDAVFGFLSLIFWLLIFVVSIKYLTFVMRADNAGEGGILTLMSLAGRNTSARTTSMLVIMGLIGGSFFYGEVVITPAISVMSAIEGLEIVAPQLDTWIVPLSIIVLTLLFMIQKHGTAMVGKLFAPIMLTWFLILAGLGLRSIIANPEVLHALNPMWAVHFFLEYKTVSFIALGAVVLSITGVEALYADMGHFGKFPIRLAWFTVVLPSLTLNYFGQGALLLKNPEAIKNPFFLLAPDWALIPLLIIAALATVIASQAVISGVFSLTRQAVRLGYLSPMRIIHTSEMESGQIYIPFVNWMLYVAVVIVIVSFEHSSNLAAAYGIAVTGTMVLTSILSTTVARQNWHWNKYFVALILIAFLCVDIPLFTANLDKLLSGGWLPLSLGTVMFIVMTTWKSERFRLLRRMHEHGNSLEAMIASLEKSPPVRVPGTAVYMSRAINVIPFALMHNLKHNKVLHERVILLTLRTEDAPYVHNVRRVQIEQLSLTFWRVVASYGWRETPNVEEVFHRCGLEGLSCRMMETSFFMSHESLILGKRPWYLRLRGKLYLLLQRNALRAPDQFEIPPNRVIELGTQVEI</sequence>
<protein>
    <recommendedName>
        <fullName evidence="1">Low affinity potassium transport system protein Kup</fullName>
    </recommendedName>
    <alternativeName>
        <fullName evidence="1">Kup system potassium uptake protein</fullName>
    </alternativeName>
</protein>
<evidence type="ECO:0000255" key="1">
    <source>
        <dbReference type="HAMAP-Rule" id="MF_01522"/>
    </source>
</evidence>
<name>KUP_SHIB3</name>
<feature type="chain" id="PRO_1000190284" description="Low affinity potassium transport system protein Kup">
    <location>
        <begin position="1"/>
        <end position="622"/>
    </location>
</feature>
<feature type="transmembrane region" description="Helical" evidence="1">
    <location>
        <begin position="9"/>
        <end position="29"/>
    </location>
</feature>
<feature type="transmembrane region" description="Helical" evidence="1">
    <location>
        <begin position="49"/>
        <end position="69"/>
    </location>
</feature>
<feature type="transmembrane region" description="Helical" evidence="1">
    <location>
        <begin position="103"/>
        <end position="123"/>
    </location>
</feature>
<feature type="transmembrane region" description="Helical" evidence="1">
    <location>
        <begin position="137"/>
        <end position="157"/>
    </location>
</feature>
<feature type="transmembrane region" description="Helical" evidence="1">
    <location>
        <begin position="165"/>
        <end position="185"/>
    </location>
</feature>
<feature type="transmembrane region" description="Helical" evidence="1">
    <location>
        <begin position="213"/>
        <end position="233"/>
    </location>
</feature>
<feature type="transmembrane region" description="Helical" evidence="1">
    <location>
        <begin position="247"/>
        <end position="267"/>
    </location>
</feature>
<feature type="transmembrane region" description="Helical" evidence="1">
    <location>
        <begin position="276"/>
        <end position="296"/>
    </location>
</feature>
<feature type="transmembrane region" description="Helical" evidence="1">
    <location>
        <begin position="337"/>
        <end position="357"/>
    </location>
</feature>
<feature type="transmembrane region" description="Helical" evidence="1">
    <location>
        <begin position="363"/>
        <end position="383"/>
    </location>
</feature>
<feature type="transmembrane region" description="Helical" evidence="1">
    <location>
        <begin position="396"/>
        <end position="416"/>
    </location>
</feature>
<feature type="transmembrane region" description="Helical" evidence="1">
    <location>
        <begin position="419"/>
        <end position="439"/>
    </location>
</feature>
<proteinExistence type="inferred from homology"/>